<name>THI4_PYRIL</name>
<comment type="function">
    <text evidence="1">Involved in the biosynthesis of the thiazole moiety of thiamine. Catalyzes the conversion of NAD and glycine to adenosine diphosphate 5-(2-hydroxyethyl)-4-methylthiazole-2-carboxylate (ADT), an adenylated thiazole intermediate, using free sulfide as a source of sulfur.</text>
</comment>
<comment type="catalytic activity">
    <reaction evidence="1">
        <text>hydrogen sulfide + glycine + NAD(+) = ADP-5-ethyl-4-methylthiazole-2-carboxylate + nicotinamide + 3 H2O + H(+)</text>
        <dbReference type="Rhea" id="RHEA:55704"/>
        <dbReference type="ChEBI" id="CHEBI:15377"/>
        <dbReference type="ChEBI" id="CHEBI:15378"/>
        <dbReference type="ChEBI" id="CHEBI:17154"/>
        <dbReference type="ChEBI" id="CHEBI:29919"/>
        <dbReference type="ChEBI" id="CHEBI:57305"/>
        <dbReference type="ChEBI" id="CHEBI:57540"/>
        <dbReference type="ChEBI" id="CHEBI:139151"/>
        <dbReference type="EC" id="2.4.2.59"/>
    </reaction>
</comment>
<comment type="cofactor">
    <cofactor evidence="1">
        <name>Fe(2+)</name>
        <dbReference type="ChEBI" id="CHEBI:29033"/>
    </cofactor>
</comment>
<comment type="pathway">
    <text evidence="1">Cofactor biosynthesis; thiamine diphosphate biosynthesis.</text>
</comment>
<comment type="subunit">
    <text evidence="1">Homooctamer; tetramer of dimers.</text>
</comment>
<comment type="similarity">
    <text evidence="1">Belongs to the THI4 family.</text>
</comment>
<comment type="sequence caution" evidence="2">
    <conflict type="erroneous initiation">
        <sequence resource="EMBL-CDS" id="ABL89145"/>
    </conflict>
</comment>
<gene>
    <name evidence="1" type="primary">thi4</name>
    <name type="ordered locus">Pisl_1998</name>
</gene>
<reference key="1">
    <citation type="submission" date="2006-12" db="EMBL/GenBank/DDBJ databases">
        <title>Complete sequence of Pyrobaculum islandicum DSM 4184.</title>
        <authorList>
            <person name="Copeland A."/>
            <person name="Lucas S."/>
            <person name="Lapidus A."/>
            <person name="Barry K."/>
            <person name="Detter J.C."/>
            <person name="Glavina del Rio T."/>
            <person name="Dalin E."/>
            <person name="Tice H."/>
            <person name="Pitluck S."/>
            <person name="Meincke L."/>
            <person name="Brettin T."/>
            <person name="Bruce D."/>
            <person name="Han C."/>
            <person name="Tapia R."/>
            <person name="Gilna P."/>
            <person name="Schmutz J."/>
            <person name="Larimer F."/>
            <person name="Land M."/>
            <person name="Hauser L."/>
            <person name="Kyrpides N."/>
            <person name="Mikhailova N."/>
            <person name="Cozen A.E."/>
            <person name="Fitz-Gibbon S.T."/>
            <person name="House C.H."/>
            <person name="Saltikov C."/>
            <person name="Lowe T."/>
            <person name="Richardson P."/>
        </authorList>
    </citation>
    <scope>NUCLEOTIDE SEQUENCE [LARGE SCALE GENOMIC DNA]</scope>
    <source>
        <strain>DSM 4184 / JCM 9189 / GEO3</strain>
    </source>
</reference>
<keyword id="KW-0408">Iron</keyword>
<keyword id="KW-0479">Metal-binding</keyword>
<keyword id="KW-0520">NAD</keyword>
<keyword id="KW-0784">Thiamine biosynthesis</keyword>
<keyword id="KW-0808">Transferase</keyword>
<evidence type="ECO:0000255" key="1">
    <source>
        <dbReference type="HAMAP-Rule" id="MF_00304"/>
    </source>
</evidence>
<evidence type="ECO:0000305" key="2"/>
<proteinExistence type="inferred from homology"/>
<organism>
    <name type="scientific">Pyrobaculum islandicum (strain DSM 4184 / JCM 9189 / GEO3)</name>
    <dbReference type="NCBI Taxonomy" id="384616"/>
    <lineage>
        <taxon>Archaea</taxon>
        <taxon>Thermoproteota</taxon>
        <taxon>Thermoprotei</taxon>
        <taxon>Thermoproteales</taxon>
        <taxon>Thermoproteaceae</taxon>
        <taxon>Pyrobaculum</taxon>
    </lineage>
</organism>
<accession>A1RW13</accession>
<dbReference type="EC" id="2.4.2.59" evidence="1"/>
<dbReference type="EMBL" id="CP000504">
    <property type="protein sequence ID" value="ABL89145.1"/>
    <property type="status" value="ALT_INIT"/>
    <property type="molecule type" value="Genomic_DNA"/>
</dbReference>
<dbReference type="RefSeq" id="WP_053240513.1">
    <property type="nucleotide sequence ID" value="NC_008701.1"/>
</dbReference>
<dbReference type="SMR" id="A1RW13"/>
<dbReference type="STRING" id="384616.Pisl_1998"/>
<dbReference type="GeneID" id="4617069"/>
<dbReference type="KEGG" id="pis:Pisl_1998"/>
<dbReference type="eggNOG" id="arCOG00574">
    <property type="taxonomic scope" value="Archaea"/>
</dbReference>
<dbReference type="HOGENOM" id="CLU_053727_2_0_2"/>
<dbReference type="OrthoDB" id="4240at2157"/>
<dbReference type="UniPathway" id="UPA00060"/>
<dbReference type="Proteomes" id="UP000002595">
    <property type="component" value="Chromosome"/>
</dbReference>
<dbReference type="GO" id="GO:0005506">
    <property type="term" value="F:iron ion binding"/>
    <property type="evidence" value="ECO:0007669"/>
    <property type="project" value="UniProtKB-UniRule"/>
</dbReference>
<dbReference type="GO" id="GO:0016763">
    <property type="term" value="F:pentosyltransferase activity"/>
    <property type="evidence" value="ECO:0007669"/>
    <property type="project" value="UniProtKB-UniRule"/>
</dbReference>
<dbReference type="GO" id="GO:0009228">
    <property type="term" value="P:thiamine biosynthetic process"/>
    <property type="evidence" value="ECO:0007669"/>
    <property type="project" value="UniProtKB-KW"/>
</dbReference>
<dbReference type="GO" id="GO:0009229">
    <property type="term" value="P:thiamine diphosphate biosynthetic process"/>
    <property type="evidence" value="ECO:0007669"/>
    <property type="project" value="UniProtKB-UniRule"/>
</dbReference>
<dbReference type="GO" id="GO:0052837">
    <property type="term" value="P:thiazole biosynthetic process"/>
    <property type="evidence" value="ECO:0007669"/>
    <property type="project" value="UniProtKB-UniRule"/>
</dbReference>
<dbReference type="Gene3D" id="3.50.50.60">
    <property type="entry name" value="FAD/NAD(P)-binding domain"/>
    <property type="match status" value="1"/>
</dbReference>
<dbReference type="HAMAP" id="MF_00304">
    <property type="entry name" value="Thi4"/>
    <property type="match status" value="1"/>
</dbReference>
<dbReference type="InterPro" id="IPR036188">
    <property type="entry name" value="FAD/NAD-bd_sf"/>
</dbReference>
<dbReference type="InterPro" id="IPR002922">
    <property type="entry name" value="Thi4_fam"/>
</dbReference>
<dbReference type="InterPro" id="IPR022828">
    <property type="entry name" value="Thi4_prok"/>
</dbReference>
<dbReference type="NCBIfam" id="TIGR00292">
    <property type="entry name" value="sulfide-dependent adenosine diphosphate thiazole synthase"/>
    <property type="match status" value="1"/>
</dbReference>
<dbReference type="PANTHER" id="PTHR43422">
    <property type="entry name" value="THIAMINE THIAZOLE SYNTHASE"/>
    <property type="match status" value="1"/>
</dbReference>
<dbReference type="PANTHER" id="PTHR43422:SF3">
    <property type="entry name" value="THIAMINE THIAZOLE SYNTHASE"/>
    <property type="match status" value="1"/>
</dbReference>
<dbReference type="Pfam" id="PF01946">
    <property type="entry name" value="Thi4"/>
    <property type="match status" value="1"/>
</dbReference>
<dbReference type="PRINTS" id="PR00419">
    <property type="entry name" value="ADXRDTASE"/>
</dbReference>
<dbReference type="SUPFAM" id="SSF51905">
    <property type="entry name" value="FAD/NAD(P)-binding domain"/>
    <property type="match status" value="1"/>
</dbReference>
<sequence>MELKIARAIIKHGLEDLYEYSDVDVAIVGAGPAGLTAARYLAERGHKVVVYERRFSFGGGIGPGGNMIPKIVVQEEAVPVLRDFKIRYKPVGDGLYTVDPAELIAKLAAGAIDAGAKIILGVHVDDVIFRGDPPRVVGLLWVWTPIQMSGSHVDPLYTQAKAVLDATGHDAEVISIAARKVPELGIEVRGEKSAWAEVSEKLVVEHTGRVAPGLYVAGMAVCTVHGLPRMGPIFGGMLLSGRRAAEIIHKDLVEEVYAVRA</sequence>
<protein>
    <recommendedName>
        <fullName evidence="1">Thiamine thiazole synthase</fullName>
        <ecNumber evidence="1">2.4.2.59</ecNumber>
    </recommendedName>
</protein>
<feature type="chain" id="PRO_0000322222" description="Thiamine thiazole synthase">
    <location>
        <begin position="1"/>
        <end position="261"/>
    </location>
</feature>
<feature type="binding site" description="in other chain" evidence="1">
    <location>
        <position position="33"/>
    </location>
    <ligand>
        <name>NAD(+)</name>
        <dbReference type="ChEBI" id="CHEBI:57540"/>
        <note>ligand shared between two adjacent protomers</note>
    </ligand>
</feature>
<feature type="binding site" description="in other chain" evidence="1">
    <location>
        <begin position="52"/>
        <end position="53"/>
    </location>
    <ligand>
        <name>NAD(+)</name>
        <dbReference type="ChEBI" id="CHEBI:57540"/>
        <note>ligand shared between two adjacent protomers</note>
    </ligand>
</feature>
<feature type="binding site" description="in other chain" evidence="1">
    <location>
        <position position="60"/>
    </location>
    <ligand>
        <name>NAD(+)</name>
        <dbReference type="ChEBI" id="CHEBI:57540"/>
        <note>ligand shared between two adjacent protomers</note>
    </ligand>
</feature>
<feature type="binding site" description="in other chain" evidence="1">
    <location>
        <position position="124"/>
    </location>
    <ligand>
        <name>NAD(+)</name>
        <dbReference type="ChEBI" id="CHEBI:57540"/>
        <note>ligand shared between two adjacent protomers</note>
    </ligand>
</feature>
<feature type="binding site" evidence="1">
    <location>
        <begin position="152"/>
        <end position="154"/>
    </location>
    <ligand>
        <name>NAD(+)</name>
        <dbReference type="ChEBI" id="CHEBI:57540"/>
        <note>ligand shared between two adjacent protomers</note>
    </ligand>
</feature>
<feature type="binding site" evidence="1">
    <location>
        <position position="154"/>
    </location>
    <ligand>
        <name>Fe cation</name>
        <dbReference type="ChEBI" id="CHEBI:24875"/>
        <note>ligand shared between two adjacent protomers</note>
    </ligand>
</feature>
<feature type="binding site" description="in other chain" evidence="1">
    <location>
        <position position="169"/>
    </location>
    <ligand>
        <name>Fe cation</name>
        <dbReference type="ChEBI" id="CHEBI:24875"/>
        <note>ligand shared between two adjacent protomers</note>
    </ligand>
</feature>
<feature type="binding site" description="in other chain" evidence="1">
    <location>
        <position position="219"/>
    </location>
    <ligand>
        <name>NAD(+)</name>
        <dbReference type="ChEBI" id="CHEBI:57540"/>
        <note>ligand shared between two adjacent protomers</note>
    </ligand>
</feature>
<feature type="binding site" evidence="1">
    <location>
        <position position="229"/>
    </location>
    <ligand>
        <name>glycine</name>
        <dbReference type="ChEBI" id="CHEBI:57305"/>
    </ligand>
</feature>